<accession>A0A0A1I6E7</accession>
<comment type="function">
    <text evidence="2">Has antimicrobial activity against the Gram-positive bacteria S.aureus (MIC=8 uM) and the yeast C.albicans (MIC=16 uM). Causes hemolysis on horse erythrocytes (64 uM for 100% hemolysis). Minimum bactericidal concentrations have also been tested against S.aureus and is four-fold higher (MBC=32 uM).</text>
</comment>
<comment type="subcellular location">
    <subcellularLocation>
        <location evidence="2">Secreted</location>
    </subcellularLocation>
    <subcellularLocation>
        <location evidence="1">Target cell membrane</location>
    </subcellularLocation>
    <text evidence="1">Forms a helical membrane channel in the prey.</text>
</comment>
<comment type="tissue specificity">
    <text evidence="3">Expressed by the venom gland.</text>
</comment>
<comment type="mass spectrometry" mass="1961.76" method="Electrospray" evidence="2"/>
<comment type="miscellaneous">
    <text evidence="2">Negative results: does not show antimicrobial activity against the Gram-negative bacteria E.coli (MIC&gt;250 uM). Does not show effect on four different human cancer cell lines.</text>
</comment>
<comment type="similarity">
    <text evidence="3">Belongs to the non-disulfide-bridged peptide (NDBP) superfamily. Short antimicrobial peptide (group 4) family.</text>
</comment>
<protein>
    <recommendedName>
        <fullName>Antimicrobial peptide AcrAP1</fullName>
    </recommendedName>
</protein>
<proteinExistence type="evidence at protein level"/>
<reference key="1">
    <citation type="journal article" date="2014" name="Int. J. Biol. Sci.">
        <title>Cationicity-enhanced analogues of the antimicrobial peptides, AcrAP1 and AcrAP2, from the venom of the scorpion, Androctonus crassicauda, display potent growth modulation effects on human cancer cell lines.</title>
        <authorList>
            <person name="Du Q."/>
            <person name="Hou X."/>
            <person name="Ge L."/>
            <person name="Li R."/>
            <person name="Zhou M."/>
            <person name="Wang H."/>
            <person name="Wang L."/>
            <person name="Wei M."/>
            <person name="Chen T."/>
            <person name="Shaw C."/>
        </authorList>
    </citation>
    <scope>NUCLEOTIDE SEQUENCE [MRNA]</scope>
    <scope>MASS SPECTROMETRY</scope>
    <scope>SYNTHESIS OF 23-40</scope>
    <scope>FUNCTION</scope>
    <scope>MUTAGENESIS OF SER-26; HIS-30; SER-33 AND SER-37</scope>
    <scope>AMIDATION AT LYS-40</scope>
    <source>
        <tissue>Venom</tissue>
        <tissue>Venom gland</tissue>
    </source>
</reference>
<name>NDB4S_ANDCR</name>
<feature type="signal peptide" evidence="2">
    <location>
        <begin position="1"/>
        <end position="22"/>
    </location>
</feature>
<feature type="peptide" id="PRO_0000432592" description="Antimicrobial peptide AcrAP1">
    <location>
        <begin position="23"/>
        <end position="40"/>
    </location>
</feature>
<feature type="propeptide" id="PRO_0000432593" evidence="2">
    <location>
        <begin position="46"/>
        <end position="74"/>
    </location>
</feature>
<feature type="modified residue" description="Lysine amide" evidence="2">
    <location>
        <position position="40"/>
    </location>
</feature>
<feature type="mutagenesis site" description="Shows important increase in antimicrobial activity against E.coli (MIC=8 uM) and slight increase against S.aureus (MIC=4 uM) and C.albicans (MIC=4 uM), as well as slight increase in hemolytic activity (32 uM for 100% hemolysis). Also shows anti-proliferative effects on four cancer cell lines; when associated with K-30; K-33 and K-37." evidence="2">
    <original>S</original>
    <variation>K</variation>
    <location>
        <position position="26"/>
    </location>
</feature>
<feature type="mutagenesis site" description="Shows important increase in antimicrobial activity against E.coli (MIC=8 uM) and slight increase against S.aureus (MIC=4 uM) and C.albicans (MIC=4 uM), as well as slight increase in hemolytic activity (32 uM for 100% hemolysis). Also shows anti-proliferative effects on four cancer cell lines; when associated with K-26; K-33 and K-37." evidence="2">
    <original>H</original>
    <variation>K</variation>
    <location>
        <position position="30"/>
    </location>
</feature>
<feature type="mutagenesis site" description="Shows important increase in antimicrobial activity against E.coli (MIC=8 uM) and slight increase against S.aureus (MIC=4 uM) and C.albicans (MIC=4 uM), as well as slight increase in hemolytic activity (32 uM for 100% hemolysis). Also shows anti-proliferative effects on four cancer cell lines; when associated with K-26; K-30 and K-37." evidence="2">
    <original>S</original>
    <variation>K</variation>
    <location>
        <position position="33"/>
    </location>
</feature>
<feature type="mutagenesis site" description="Shows important increase in antimicrobial activity against E.coli (MIC=8 uM) and slight increase against S.aureus (MIC=4 uM) and C.albicans (MIC=4 uM), as well as slight increase in hemolytic activity (32 uM for 100% hemolysis). Also shows anti-proliferative effects on four cancer cell lines; when associated with K-26; K-30 and K-33." evidence="2">
    <original>S</original>
    <variation>K</variation>
    <location>
        <position position="37"/>
    </location>
</feature>
<organism>
    <name type="scientific">Androctonus crassicauda</name>
    <name type="common">Arabian fat-tailed scorpion</name>
    <dbReference type="NCBI Taxonomy" id="122909"/>
    <lineage>
        <taxon>Eukaryota</taxon>
        <taxon>Metazoa</taxon>
        <taxon>Ecdysozoa</taxon>
        <taxon>Arthropoda</taxon>
        <taxon>Chelicerata</taxon>
        <taxon>Arachnida</taxon>
        <taxon>Scorpiones</taxon>
        <taxon>Buthida</taxon>
        <taxon>Buthoidea</taxon>
        <taxon>Buthidae</taxon>
        <taxon>Androctonus</taxon>
    </lineage>
</organism>
<sequence length="74" mass="8679">MEIKYLLTVFLVLLIVSDHCQAFLFSLIPHAISGLISAFKGRRKRDLDGQIDRFRNFRKRDAELEELLSKLPIY</sequence>
<keyword id="KW-0027">Amidation</keyword>
<keyword id="KW-0044">Antibiotic</keyword>
<keyword id="KW-0929">Antimicrobial</keyword>
<keyword id="KW-0165">Cleavage on pair of basic residues</keyword>
<keyword id="KW-0295">Fungicide</keyword>
<keyword id="KW-0472">Membrane</keyword>
<keyword id="KW-0964">Secreted</keyword>
<keyword id="KW-0732">Signal</keyword>
<keyword id="KW-1052">Target cell membrane</keyword>
<keyword id="KW-1053">Target membrane</keyword>
<evidence type="ECO:0000250" key="1"/>
<evidence type="ECO:0000269" key="2">
    <source>
    </source>
</evidence>
<evidence type="ECO:0000305" key="3"/>
<dbReference type="EMBL" id="HG939518">
    <property type="protein sequence ID" value="CDN67527.1"/>
    <property type="molecule type" value="mRNA"/>
</dbReference>
<dbReference type="SMR" id="A0A0A1I6E7"/>
<dbReference type="GO" id="GO:0005576">
    <property type="term" value="C:extracellular region"/>
    <property type="evidence" value="ECO:0007669"/>
    <property type="project" value="UniProtKB-SubCell"/>
</dbReference>
<dbReference type="GO" id="GO:0016020">
    <property type="term" value="C:membrane"/>
    <property type="evidence" value="ECO:0007669"/>
    <property type="project" value="UniProtKB-KW"/>
</dbReference>
<dbReference type="GO" id="GO:0044218">
    <property type="term" value="C:other organism cell membrane"/>
    <property type="evidence" value="ECO:0007669"/>
    <property type="project" value="UniProtKB-KW"/>
</dbReference>
<dbReference type="GO" id="GO:0042742">
    <property type="term" value="P:defense response to bacterium"/>
    <property type="evidence" value="ECO:0007669"/>
    <property type="project" value="UniProtKB-KW"/>
</dbReference>
<dbReference type="GO" id="GO:0050832">
    <property type="term" value="P:defense response to fungus"/>
    <property type="evidence" value="ECO:0007669"/>
    <property type="project" value="UniProtKB-KW"/>
</dbReference>
<dbReference type="GO" id="GO:0031640">
    <property type="term" value="P:killing of cells of another organism"/>
    <property type="evidence" value="ECO:0007669"/>
    <property type="project" value="UniProtKB-KW"/>
</dbReference>